<accession>O35451</accession>
<name>ATF6B_MOUSE</name>
<sequence length="699" mass="76007">MAELMLLSEIADPTRFFTDNLLSPEDWDSTLYSGLDEVAEEQAQLFRCVEQDVPFDSSSLDVGMDVSPPEPPWDPLPIFPDLQVKSEPSSPCSSSSLSSESSHLSTEPPSQVPGVGEVLHVKMESLAPPLCLLGDDPASPFETVQITVGSASDDLSDIQTKLEPASPSSSVHSEASLLSADSPSQPFIGEEVLEVKTESPSPPGCLLWDVPASSLGAVQISMGPSPDSSSGKAPATRKPPLQPKPVVLTTVPVPPRAGPTSAAVLLQPLVQQPAVSPVVLIQGAIRVQPEGPAPAAPRPERKSIVPAPMPGNSCPPEVDAKLLKRQQRMIKNRESACQSRRKKKEYLQGLEARLQAVLADNQQLRRENAALRRRLEALLAENSGLKLGSGNRKVVCIMVFLLFIAFNFGPVSISEPPPAPMSPRMSREEPRPQRHLLGFSEPGPAHGMEPLREAAQSPGEQQPSSAGRPSFRNLTAFPGGAKELLLRDLDQLFLSSDCRHFNRTESLRLADELSGWVQRHQRGRRKIPHRAQERQKSQLRKKSPPVKPVPTQPPGPPERDPVGQLQLYRHPGRSQPEFLDAIDRREDTFYVVSFRRDHLLLPAISHNKTSRPKMSLVMPAMAPNETVSGRGPPGDYEEMMQIECEVMDTRVIHIKTSTVPPSLRKQPSPSPGNTTGGPLPGSAASPAHQASQPLYLNHP</sequence>
<comment type="function">
    <molecule>Cyclic AMP-dependent transcription factor ATF-6 beta</molecule>
    <text evidence="2">Precursor of the transcription factor form (Processed cyclic AMP-dependent transcription factor ATF-6 beta), which is embedded in the endoplasmic reticulum membrane. Endoplasmic reticulum stress promotes processing of this form, releasing the transcription factor form that translocates into the nucleus, where it activates transcription of genes involved in the unfolded protein response (UPR).</text>
</comment>
<comment type="function">
    <molecule>Processed cyclic AMP-dependent transcription factor ATF-6 beta</molecule>
    <text evidence="2">Transcription factor that acts in the unfolded protein response (UPR) pathway by activating UPR target genes induced during ER stress. Binds DNA on the 5'-CCAC[GA]-3' half of the ER stress response element (ERSE) (5'-CCAATN(9)CCAC[GA]-3') when NF-Y is bound to ERSE.</text>
</comment>
<comment type="subunit">
    <molecule>Processed cyclic AMP-dependent transcription factor ATF-6 beta</molecule>
    <text evidence="2">Homodimer and heterodimer with ATF6-alpha. The dimer interacts with the nuclear transcription factor Y (NF-Y) trimer through direct binding to NF-Y subunit C (NF-YC).</text>
</comment>
<comment type="interaction">
    <interactant intactId="EBI-8361741">
        <id>O35451</id>
    </interactant>
    <interactant intactId="EBI-772325">
        <id>P20029</id>
        <label>Hspa5</label>
    </interactant>
    <organismsDiffer>false</organismsDiffer>
    <experiments>2</experiments>
</comment>
<comment type="subcellular location">
    <subcellularLocation>
        <location evidence="2">Endoplasmic reticulum membrane</location>
        <topology evidence="3">Single-pass type II membrane protein</topology>
    </subcellularLocation>
</comment>
<comment type="subcellular location">
    <molecule>Processed cyclic AMP-dependent transcription factor ATF-6 beta</molecule>
    <subcellularLocation>
        <location evidence="2">Nucleus</location>
    </subcellularLocation>
    <text evidence="2">Under ER stress the cleaved N-terminal cytoplasmic domain translocates into the nucleus.</text>
</comment>
<comment type="domain">
    <text evidence="2">The basic domain functions as a nuclear localization signal.</text>
</comment>
<comment type="domain">
    <text evidence="2">The basic leucine-zipper domain is sufficient for association with the NF-Y trimer and binding to ERSE.</text>
</comment>
<comment type="PTM">
    <text evidence="2">N-glycosylated.</text>
</comment>
<comment type="PTM">
    <text evidence="2">During unfolded protein response, a fragment of approximately 60 kDa containing the cytoplasmic transcription factor domain is released by proteolysis. The cleavage is probably performed sequentially by site-1 (MBTPS1, S1P) and site-2 (MBTPS2, S2P) proteases.</text>
</comment>
<comment type="similarity">
    <text evidence="6">Belongs to the bZIP family. ATF subfamily.</text>
</comment>
<feature type="initiator methionine" description="Removed" evidence="2">
    <location>
        <position position="1"/>
    </location>
</feature>
<feature type="chain" id="PRO_0000076591" description="Cyclic AMP-dependent transcription factor ATF-6 beta">
    <location>
        <begin position="2"/>
        <end position="699"/>
    </location>
</feature>
<feature type="chain" id="PRO_0000296202" description="Processed cyclic AMP-dependent transcription factor ATF-6 beta">
    <location>
        <begin position="2"/>
        <end status="unknown"/>
    </location>
</feature>
<feature type="topological domain" description="Cytoplasmic" evidence="3">
    <location>
        <begin position="2"/>
        <end position="393"/>
    </location>
</feature>
<feature type="transmembrane region" description="Helical; Signal-anchor for type II membrane protein" evidence="3">
    <location>
        <begin position="394"/>
        <end position="414"/>
    </location>
</feature>
<feature type="topological domain" description="Lumenal" evidence="3">
    <location>
        <begin position="415"/>
        <end position="699"/>
    </location>
</feature>
<feature type="domain" description="bZIP" evidence="4">
    <location>
        <begin position="322"/>
        <end position="385"/>
    </location>
</feature>
<feature type="region of interest" description="Disordered" evidence="5">
    <location>
        <begin position="59"/>
        <end position="114"/>
    </location>
</feature>
<feature type="region of interest" description="Disordered" evidence="5">
    <location>
        <begin position="218"/>
        <end position="246"/>
    </location>
</feature>
<feature type="region of interest" description="Disordered" evidence="5">
    <location>
        <begin position="290"/>
        <end position="313"/>
    </location>
</feature>
<feature type="region of interest" description="Basic motif" evidence="4">
    <location>
        <begin position="324"/>
        <end position="344"/>
    </location>
</feature>
<feature type="region of interest" description="Leucine-zipper" evidence="4">
    <location>
        <begin position="347"/>
        <end position="354"/>
    </location>
</feature>
<feature type="region of interest" description="Disordered" evidence="5">
    <location>
        <begin position="417"/>
        <end position="474"/>
    </location>
</feature>
<feature type="region of interest" description="Disordered" evidence="5">
    <location>
        <begin position="519"/>
        <end position="563"/>
    </location>
</feature>
<feature type="region of interest" description="Disordered" evidence="5">
    <location>
        <begin position="657"/>
        <end position="699"/>
    </location>
</feature>
<feature type="compositionally biased region" description="Pro residues" evidence="5">
    <location>
        <begin position="68"/>
        <end position="78"/>
    </location>
</feature>
<feature type="compositionally biased region" description="Low complexity" evidence="5">
    <location>
        <begin position="86"/>
        <end position="109"/>
    </location>
</feature>
<feature type="compositionally biased region" description="Polar residues" evidence="5">
    <location>
        <begin position="458"/>
        <end position="467"/>
    </location>
</feature>
<feature type="compositionally biased region" description="Basic residues" evidence="5">
    <location>
        <begin position="519"/>
        <end position="529"/>
    </location>
</feature>
<feature type="compositionally biased region" description="Pro residues" evidence="5">
    <location>
        <begin position="545"/>
        <end position="556"/>
    </location>
</feature>
<feature type="compositionally biased region" description="Low complexity" evidence="5">
    <location>
        <begin position="680"/>
        <end position="693"/>
    </location>
</feature>
<feature type="site" description="Important for cleavage by MBTPS2" evidence="1">
    <location>
        <position position="407"/>
    </location>
</feature>
<feature type="site" description="Important for cleavage by MBTPS2" evidence="1">
    <location>
        <position position="410"/>
    </location>
</feature>
<feature type="site" description="Cleavage; by MBTPS1" evidence="1">
    <location>
        <begin position="437"/>
        <end position="438"/>
    </location>
</feature>
<feature type="modified residue" description="N-acetylalanine" evidence="2">
    <location>
        <position position="2"/>
    </location>
</feature>
<feature type="glycosylation site" description="N-linked (GlcNAc...) asparagine" evidence="3">
    <location>
        <position position="473"/>
    </location>
</feature>
<feature type="glycosylation site" description="N-linked (GlcNAc...) asparagine" evidence="3">
    <location>
        <position position="502"/>
    </location>
</feature>
<feature type="glycosylation site" description="N-linked (GlcNAc...) asparagine" evidence="3">
    <location>
        <position position="607"/>
    </location>
</feature>
<feature type="glycosylation site" description="N-linked (GlcNAc...) asparagine" evidence="3">
    <location>
        <position position="624"/>
    </location>
</feature>
<feature type="glycosylation site" description="N-linked (GlcNAc...) asparagine" evidence="3">
    <location>
        <position position="673"/>
    </location>
</feature>
<reference key="1">
    <citation type="journal article" date="2003" name="Genome Res.">
        <title>Analysis of the gene-dense major histocompatibility complex class III region and its comparison to mouse.</title>
        <authorList>
            <person name="Xie T."/>
            <person name="Rowen L."/>
            <person name="Aguado B."/>
            <person name="Ahearn M.E."/>
            <person name="Madan A."/>
            <person name="Qin S."/>
            <person name="Campbell R.D."/>
            <person name="Hood L."/>
        </authorList>
    </citation>
    <scope>NUCLEOTIDE SEQUENCE [LARGE SCALE GENOMIC DNA]</scope>
    <source>
        <strain>129</strain>
    </source>
</reference>
<reference key="2">
    <citation type="journal article" date="2004" name="Genome Res.">
        <title>The status, quality, and expansion of the NIH full-length cDNA project: the Mammalian Gene Collection (MGC).</title>
        <authorList>
            <consortium name="The MGC Project Team"/>
        </authorList>
    </citation>
    <scope>NUCLEOTIDE SEQUENCE [LARGE SCALE MRNA]</scope>
    <source>
        <tissue>Colon</tissue>
        <tissue>Kidney</tissue>
    </source>
</reference>
<reference key="3">
    <citation type="journal article" date="1998" name="Gene">
        <title>Structural analysis of mouse tenascin-X: evolutionary aspects of reduplication of FNIII repeats in the tenascin gene family.</title>
        <authorList>
            <person name="Ikuta T."/>
            <person name="Sogawa N."/>
            <person name="Ariga H."/>
            <person name="Ikemura T."/>
            <person name="Matsumoto K."/>
        </authorList>
    </citation>
    <scope>NUCLEOTIDE SEQUENCE [GENOMIC DNA] OF 654-699</scope>
    <source>
        <strain>C57BL/6 X CBA</strain>
    </source>
</reference>
<protein>
    <recommendedName>
        <fullName>Cyclic AMP-dependent transcription factor ATF-6 beta</fullName>
        <shortName>cAMP-dependent transcription factor ATF-6 beta</shortName>
    </recommendedName>
    <alternativeName>
        <fullName>Activating transcription factor 6 beta</fullName>
        <shortName>ATF6-beta</shortName>
    </alternativeName>
    <alternativeName>
        <fullName>cAMP response element-binding protein-related protein</fullName>
        <shortName>Creb-rp</shortName>
    </alternativeName>
    <alternativeName>
        <fullName>cAMP-responsive element-binding protein-like 1</fullName>
    </alternativeName>
    <component>
        <recommendedName>
            <fullName>Processed cyclic AMP-dependent transcription factor ATF-6 beta</fullName>
        </recommendedName>
    </component>
</protein>
<dbReference type="EMBL" id="AF030001">
    <property type="protein sequence ID" value="AAB82014.1"/>
    <property type="molecule type" value="Genomic_DNA"/>
</dbReference>
<dbReference type="EMBL" id="BC013534">
    <property type="protein sequence ID" value="AAH13534.1"/>
    <property type="molecule type" value="mRNA"/>
</dbReference>
<dbReference type="EMBL" id="BC052635">
    <property type="protein sequence ID" value="AAH52635.1"/>
    <property type="molecule type" value="mRNA"/>
</dbReference>
<dbReference type="EMBL" id="AB010266">
    <property type="protein sequence ID" value="BAA24435.1"/>
    <property type="molecule type" value="Genomic_DNA"/>
</dbReference>
<dbReference type="PIR" id="T09069">
    <property type="entry name" value="T09069"/>
</dbReference>
<dbReference type="SMR" id="O35451"/>
<dbReference type="DIP" id="DIP-61156N"/>
<dbReference type="FunCoup" id="O35451">
    <property type="interactions" value="1447"/>
</dbReference>
<dbReference type="IntAct" id="O35451">
    <property type="interactions" value="2"/>
</dbReference>
<dbReference type="STRING" id="10090.ENSMUSP00000015605"/>
<dbReference type="GlyCosmos" id="O35451">
    <property type="glycosylation" value="5 sites, No reported glycans"/>
</dbReference>
<dbReference type="GlyGen" id="O35451">
    <property type="glycosylation" value="6 sites, 3 N-linked glycans (5 sites)"/>
</dbReference>
<dbReference type="iPTMnet" id="O35451"/>
<dbReference type="PhosphoSitePlus" id="O35451"/>
<dbReference type="CPTAC" id="non-CPTAC-3964"/>
<dbReference type="jPOST" id="O35451"/>
<dbReference type="PaxDb" id="10090-ENSMUSP00000015605"/>
<dbReference type="PeptideAtlas" id="O35451"/>
<dbReference type="ProteomicsDB" id="265145"/>
<dbReference type="Pumba" id="O35451"/>
<dbReference type="AGR" id="MGI:105121"/>
<dbReference type="MGI" id="MGI:105121">
    <property type="gene designation" value="Atf6b"/>
</dbReference>
<dbReference type="eggNOG" id="KOG4343">
    <property type="taxonomic scope" value="Eukaryota"/>
</dbReference>
<dbReference type="InParanoid" id="O35451"/>
<dbReference type="PhylomeDB" id="O35451"/>
<dbReference type="TreeFam" id="TF316079"/>
<dbReference type="Reactome" id="R-MMU-8874177">
    <property type="pathway name" value="ATF6B (ATF6-beta) activates chaperones"/>
</dbReference>
<dbReference type="ChiTaRS" id="Atf6b">
    <property type="organism name" value="mouse"/>
</dbReference>
<dbReference type="PRO" id="PR:O35451"/>
<dbReference type="Proteomes" id="UP000000589">
    <property type="component" value="Unplaced"/>
</dbReference>
<dbReference type="RNAct" id="O35451">
    <property type="molecule type" value="protein"/>
</dbReference>
<dbReference type="GO" id="GO:0000794">
    <property type="term" value="C:condensed nuclear chromosome"/>
    <property type="evidence" value="ECO:0000250"/>
    <property type="project" value="UniProtKB"/>
</dbReference>
<dbReference type="GO" id="GO:0005769">
    <property type="term" value="C:early endosome"/>
    <property type="evidence" value="ECO:0000250"/>
    <property type="project" value="UniProtKB"/>
</dbReference>
<dbReference type="GO" id="GO:0012505">
    <property type="term" value="C:endomembrane system"/>
    <property type="evidence" value="ECO:0000250"/>
    <property type="project" value="UniProtKB"/>
</dbReference>
<dbReference type="GO" id="GO:0005789">
    <property type="term" value="C:endoplasmic reticulum membrane"/>
    <property type="evidence" value="ECO:0000303"/>
    <property type="project" value="ParkinsonsUK-UCL"/>
</dbReference>
<dbReference type="GO" id="GO:0005815">
    <property type="term" value="C:microtubule organizing center"/>
    <property type="evidence" value="ECO:0000250"/>
    <property type="project" value="UniProtKB"/>
</dbReference>
<dbReference type="GO" id="GO:0016363">
    <property type="term" value="C:nuclear matrix"/>
    <property type="evidence" value="ECO:0000250"/>
    <property type="project" value="UniProtKB"/>
</dbReference>
<dbReference type="GO" id="GO:0005634">
    <property type="term" value="C:nucleus"/>
    <property type="evidence" value="ECO:0000303"/>
    <property type="project" value="ParkinsonsUK-UCL"/>
</dbReference>
<dbReference type="GO" id="GO:0003677">
    <property type="term" value="F:DNA binding"/>
    <property type="evidence" value="ECO:0007669"/>
    <property type="project" value="UniProtKB-KW"/>
</dbReference>
<dbReference type="GO" id="GO:0003700">
    <property type="term" value="F:DNA-binding transcription factor activity"/>
    <property type="evidence" value="ECO:0007669"/>
    <property type="project" value="InterPro"/>
</dbReference>
<dbReference type="GO" id="GO:0007076">
    <property type="term" value="P:mitotic chromosome condensation"/>
    <property type="evidence" value="ECO:0000250"/>
    <property type="project" value="UniProtKB"/>
</dbReference>
<dbReference type="GO" id="GO:1903892">
    <property type="term" value="P:negative regulation of ATF6-mediated unfolded protein response"/>
    <property type="evidence" value="ECO:0000250"/>
    <property type="project" value="UniProtKB"/>
</dbReference>
<dbReference type="GO" id="GO:0010629">
    <property type="term" value="P:negative regulation of gene expression"/>
    <property type="evidence" value="ECO:0000250"/>
    <property type="project" value="UniProtKB"/>
</dbReference>
<dbReference type="GO" id="GO:0006986">
    <property type="term" value="P:response to unfolded protein"/>
    <property type="evidence" value="ECO:0007669"/>
    <property type="project" value="UniProtKB-KW"/>
</dbReference>
<dbReference type="CDD" id="cd14700">
    <property type="entry name" value="bZIP_ATF6"/>
    <property type="match status" value="1"/>
</dbReference>
<dbReference type="FunFam" id="1.20.5.170:FF:000041">
    <property type="entry name" value="Cyclic AMP-dependent transcription factor ATF-6 beta"/>
    <property type="match status" value="1"/>
</dbReference>
<dbReference type="Gene3D" id="1.20.5.170">
    <property type="match status" value="1"/>
</dbReference>
<dbReference type="InterPro" id="IPR051882">
    <property type="entry name" value="ATF_bZIP_TF"/>
</dbReference>
<dbReference type="InterPro" id="IPR004827">
    <property type="entry name" value="bZIP"/>
</dbReference>
<dbReference type="InterPro" id="IPR046347">
    <property type="entry name" value="bZIP_sf"/>
</dbReference>
<dbReference type="PANTHER" id="PTHR46164">
    <property type="entry name" value="ATF6, ISOFORM C"/>
    <property type="match status" value="1"/>
</dbReference>
<dbReference type="PANTHER" id="PTHR46164:SF2">
    <property type="entry name" value="CYCLIC AMP-DEPENDENT TRANSCRIPTION FACTOR ATF-6 BETA"/>
    <property type="match status" value="1"/>
</dbReference>
<dbReference type="Pfam" id="PF00170">
    <property type="entry name" value="bZIP_1"/>
    <property type="match status" value="1"/>
</dbReference>
<dbReference type="SMART" id="SM00338">
    <property type="entry name" value="BRLZ"/>
    <property type="match status" value="1"/>
</dbReference>
<dbReference type="SUPFAM" id="SSF57959">
    <property type="entry name" value="Leucine zipper domain"/>
    <property type="match status" value="1"/>
</dbReference>
<dbReference type="PROSITE" id="PS50217">
    <property type="entry name" value="BZIP"/>
    <property type="match status" value="1"/>
</dbReference>
<dbReference type="PROSITE" id="PS00036">
    <property type="entry name" value="BZIP_BASIC"/>
    <property type="match status" value="1"/>
</dbReference>
<organism>
    <name type="scientific">Mus musculus</name>
    <name type="common">Mouse</name>
    <dbReference type="NCBI Taxonomy" id="10090"/>
    <lineage>
        <taxon>Eukaryota</taxon>
        <taxon>Metazoa</taxon>
        <taxon>Chordata</taxon>
        <taxon>Craniata</taxon>
        <taxon>Vertebrata</taxon>
        <taxon>Euteleostomi</taxon>
        <taxon>Mammalia</taxon>
        <taxon>Eutheria</taxon>
        <taxon>Euarchontoglires</taxon>
        <taxon>Glires</taxon>
        <taxon>Rodentia</taxon>
        <taxon>Myomorpha</taxon>
        <taxon>Muroidea</taxon>
        <taxon>Muridae</taxon>
        <taxon>Murinae</taxon>
        <taxon>Mus</taxon>
        <taxon>Mus</taxon>
    </lineage>
</organism>
<proteinExistence type="evidence at protein level"/>
<keyword id="KW-0007">Acetylation</keyword>
<keyword id="KW-0010">Activator</keyword>
<keyword id="KW-0238">DNA-binding</keyword>
<keyword id="KW-0256">Endoplasmic reticulum</keyword>
<keyword id="KW-0325">Glycoprotein</keyword>
<keyword id="KW-0472">Membrane</keyword>
<keyword id="KW-0539">Nucleus</keyword>
<keyword id="KW-1185">Reference proteome</keyword>
<keyword id="KW-0735">Signal-anchor</keyword>
<keyword id="KW-0804">Transcription</keyword>
<keyword id="KW-0805">Transcription regulation</keyword>
<keyword id="KW-0812">Transmembrane</keyword>
<keyword id="KW-1133">Transmembrane helix</keyword>
<keyword id="KW-0834">Unfolded protein response</keyword>
<gene>
    <name type="primary">Atf6b</name>
    <name type="synonym">Crebl1</name>
</gene>
<evidence type="ECO:0000250" key="1">
    <source>
        <dbReference type="UniProtKB" id="P18850"/>
    </source>
</evidence>
<evidence type="ECO:0000250" key="2">
    <source>
        <dbReference type="UniProtKB" id="Q99941"/>
    </source>
</evidence>
<evidence type="ECO:0000255" key="3"/>
<evidence type="ECO:0000255" key="4">
    <source>
        <dbReference type="PROSITE-ProRule" id="PRU00978"/>
    </source>
</evidence>
<evidence type="ECO:0000256" key="5">
    <source>
        <dbReference type="SAM" id="MobiDB-lite"/>
    </source>
</evidence>
<evidence type="ECO:0000305" key="6"/>